<keyword id="KW-0004">4Fe-4S</keyword>
<keyword id="KW-0150">Chloroplast</keyword>
<keyword id="KW-0249">Electron transport</keyword>
<keyword id="KW-0408">Iron</keyword>
<keyword id="KW-0411">Iron-sulfur</keyword>
<keyword id="KW-0472">Membrane</keyword>
<keyword id="KW-0479">Metal-binding</keyword>
<keyword id="KW-0560">Oxidoreductase</keyword>
<keyword id="KW-0602">Photosynthesis</keyword>
<keyword id="KW-0603">Photosystem I</keyword>
<keyword id="KW-0934">Plastid</keyword>
<keyword id="KW-0677">Repeat</keyword>
<keyword id="KW-0793">Thylakoid</keyword>
<keyword id="KW-0813">Transport</keyword>
<organism>
    <name type="scientific">Lolium perenne</name>
    <name type="common">Perennial ryegrass</name>
    <dbReference type="NCBI Taxonomy" id="4522"/>
    <lineage>
        <taxon>Eukaryota</taxon>
        <taxon>Viridiplantae</taxon>
        <taxon>Streptophyta</taxon>
        <taxon>Embryophyta</taxon>
        <taxon>Tracheophyta</taxon>
        <taxon>Spermatophyta</taxon>
        <taxon>Magnoliopsida</taxon>
        <taxon>Liliopsida</taxon>
        <taxon>Poales</taxon>
        <taxon>Poaceae</taxon>
        <taxon>BOP clade</taxon>
        <taxon>Pooideae</taxon>
        <taxon>Poodae</taxon>
        <taxon>Poeae</taxon>
        <taxon>Poeae Chloroplast Group 2 (Poeae type)</taxon>
        <taxon>Loliodinae</taxon>
        <taxon>Loliinae</taxon>
        <taxon>Lolium</taxon>
    </lineage>
</organism>
<protein>
    <recommendedName>
        <fullName evidence="1">Photosystem I iron-sulfur center</fullName>
        <ecNumber evidence="1">1.97.1.12</ecNumber>
    </recommendedName>
    <alternativeName>
        <fullName evidence="1">9 kDa polypeptide</fullName>
    </alternativeName>
    <alternativeName>
        <fullName evidence="1">PSI-C</fullName>
    </alternativeName>
    <alternativeName>
        <fullName evidence="1">Photosystem I subunit VII</fullName>
    </alternativeName>
    <alternativeName>
        <fullName evidence="1">PsaC</fullName>
    </alternativeName>
</protein>
<name>PSAC_LOLPR</name>
<proteinExistence type="inferred from homology"/>
<accession>A8Y9D8</accession>
<dbReference type="EC" id="1.97.1.12" evidence="1"/>
<dbReference type="EMBL" id="AM777385">
    <property type="protein sequence ID" value="CAO86027.1"/>
    <property type="molecule type" value="Genomic_DNA"/>
</dbReference>
<dbReference type="RefSeq" id="YP_001531333.1">
    <property type="nucleotide sequence ID" value="NC_009950.1"/>
</dbReference>
<dbReference type="SMR" id="A8Y9D8"/>
<dbReference type="GeneID" id="5696624"/>
<dbReference type="KEGG" id="lper:5696624"/>
<dbReference type="GO" id="GO:0009535">
    <property type="term" value="C:chloroplast thylakoid membrane"/>
    <property type="evidence" value="ECO:0007669"/>
    <property type="project" value="UniProtKB-SubCell"/>
</dbReference>
<dbReference type="GO" id="GO:0009522">
    <property type="term" value="C:photosystem I"/>
    <property type="evidence" value="ECO:0007669"/>
    <property type="project" value="UniProtKB-KW"/>
</dbReference>
<dbReference type="GO" id="GO:0051539">
    <property type="term" value="F:4 iron, 4 sulfur cluster binding"/>
    <property type="evidence" value="ECO:0007669"/>
    <property type="project" value="UniProtKB-KW"/>
</dbReference>
<dbReference type="GO" id="GO:0009055">
    <property type="term" value="F:electron transfer activity"/>
    <property type="evidence" value="ECO:0007669"/>
    <property type="project" value="UniProtKB-UniRule"/>
</dbReference>
<dbReference type="GO" id="GO:0046872">
    <property type="term" value="F:metal ion binding"/>
    <property type="evidence" value="ECO:0007669"/>
    <property type="project" value="UniProtKB-KW"/>
</dbReference>
<dbReference type="GO" id="GO:0016491">
    <property type="term" value="F:oxidoreductase activity"/>
    <property type="evidence" value="ECO:0007669"/>
    <property type="project" value="UniProtKB-KW"/>
</dbReference>
<dbReference type="GO" id="GO:0009773">
    <property type="term" value="P:photosynthetic electron transport in photosystem I"/>
    <property type="evidence" value="ECO:0007669"/>
    <property type="project" value="InterPro"/>
</dbReference>
<dbReference type="FunFam" id="3.30.70.20:FF:000001">
    <property type="entry name" value="Photosystem I iron-sulfur center"/>
    <property type="match status" value="1"/>
</dbReference>
<dbReference type="Gene3D" id="3.30.70.20">
    <property type="match status" value="1"/>
</dbReference>
<dbReference type="HAMAP" id="MF_01303">
    <property type="entry name" value="PSI_PsaC"/>
    <property type="match status" value="1"/>
</dbReference>
<dbReference type="InterPro" id="IPR017896">
    <property type="entry name" value="4Fe4S_Fe-S-bd"/>
</dbReference>
<dbReference type="InterPro" id="IPR017900">
    <property type="entry name" value="4Fe4S_Fe_S_CS"/>
</dbReference>
<dbReference type="InterPro" id="IPR050157">
    <property type="entry name" value="PSI_iron-sulfur_center"/>
</dbReference>
<dbReference type="InterPro" id="IPR017491">
    <property type="entry name" value="PSI_PsaC"/>
</dbReference>
<dbReference type="NCBIfam" id="TIGR03048">
    <property type="entry name" value="PS_I_psaC"/>
    <property type="match status" value="1"/>
</dbReference>
<dbReference type="PANTHER" id="PTHR24960:SF79">
    <property type="entry name" value="PHOTOSYSTEM I IRON-SULFUR CENTER"/>
    <property type="match status" value="1"/>
</dbReference>
<dbReference type="PANTHER" id="PTHR24960">
    <property type="entry name" value="PHOTOSYSTEM I IRON-SULFUR CENTER-RELATED"/>
    <property type="match status" value="1"/>
</dbReference>
<dbReference type="Pfam" id="PF12838">
    <property type="entry name" value="Fer4_7"/>
    <property type="match status" value="1"/>
</dbReference>
<dbReference type="SUPFAM" id="SSF54862">
    <property type="entry name" value="4Fe-4S ferredoxins"/>
    <property type="match status" value="1"/>
</dbReference>
<dbReference type="PROSITE" id="PS00198">
    <property type="entry name" value="4FE4S_FER_1"/>
    <property type="match status" value="2"/>
</dbReference>
<dbReference type="PROSITE" id="PS51379">
    <property type="entry name" value="4FE4S_FER_2"/>
    <property type="match status" value="2"/>
</dbReference>
<geneLocation type="chloroplast"/>
<gene>
    <name evidence="1" type="primary">psaC</name>
    <name type="ordered locus">LopeCp107</name>
</gene>
<evidence type="ECO:0000255" key="1">
    <source>
        <dbReference type="HAMAP-Rule" id="MF_01303"/>
    </source>
</evidence>
<comment type="function">
    <text evidence="1">Apoprotein for the two 4Fe-4S centers FA and FB of photosystem I (PSI); essential for photochemical activity. FB is the terminal electron acceptor of PSI, donating electrons to ferredoxin. The C-terminus interacts with PsaA/B/D and helps assemble the protein into the PSI complex. Required for binding of PsaD and PsaE to PSI. PSI is a plastocyanin-ferredoxin oxidoreductase, converting photonic excitation into a charge separation, which transfers an electron from the donor P700 chlorophyll pair to the spectroscopically characterized acceptors A0, A1, FX, FA and FB in turn.</text>
</comment>
<comment type="catalytic activity">
    <reaction evidence="1">
        <text>reduced [plastocyanin] + hnu + oxidized [2Fe-2S]-[ferredoxin] = oxidized [plastocyanin] + reduced [2Fe-2S]-[ferredoxin]</text>
        <dbReference type="Rhea" id="RHEA:30407"/>
        <dbReference type="Rhea" id="RHEA-COMP:10000"/>
        <dbReference type="Rhea" id="RHEA-COMP:10001"/>
        <dbReference type="Rhea" id="RHEA-COMP:10039"/>
        <dbReference type="Rhea" id="RHEA-COMP:10040"/>
        <dbReference type="ChEBI" id="CHEBI:29036"/>
        <dbReference type="ChEBI" id="CHEBI:30212"/>
        <dbReference type="ChEBI" id="CHEBI:33737"/>
        <dbReference type="ChEBI" id="CHEBI:33738"/>
        <dbReference type="ChEBI" id="CHEBI:49552"/>
        <dbReference type="EC" id="1.97.1.12"/>
    </reaction>
</comment>
<comment type="cofactor">
    <cofactor evidence="1">
        <name>[4Fe-4S] cluster</name>
        <dbReference type="ChEBI" id="CHEBI:49883"/>
    </cofactor>
    <text evidence="1">Binds 2 [4Fe-4S] clusters. Cluster 2 is most probably the spectroscopically characterized electron acceptor FA and cluster 1 is most probably FB.</text>
</comment>
<comment type="subunit">
    <text evidence="1">The eukaryotic PSI reaction center is composed of at least 11 subunits.</text>
</comment>
<comment type="subcellular location">
    <subcellularLocation>
        <location evidence="1">Plastid</location>
        <location evidence="1">Chloroplast thylakoid membrane</location>
        <topology evidence="1">Peripheral membrane protein</topology>
        <orientation evidence="1">Stromal side</orientation>
    </subcellularLocation>
</comment>
<reference key="1">
    <citation type="journal article" date="2008" name="PLoS ONE">
        <title>An optimized chloroplast DNA extraction protocol for grasses (Poaceae) proves suitable for whole plastid genome sequencing and SNP detection.</title>
        <authorList>
            <person name="Diekmann K."/>
            <person name="Hodkinson T.R."/>
            <person name="Fricke E."/>
            <person name="Barth S."/>
        </authorList>
    </citation>
    <scope>NUCLEOTIDE SEQUENCE [LARGE SCALE GENOMIC DNA]</scope>
    <source>
        <strain>cv. Cashel</strain>
    </source>
</reference>
<sequence>MSHSVKIYDTCIGCTQCVRACPTDVLEMIPWDGCKAKQIASAPRTEDCVGCKRCESACPTDFLSVRVYLGPETTRSMALSY</sequence>
<feature type="chain" id="PRO_0000322045" description="Photosystem I iron-sulfur center">
    <location>
        <begin position="1"/>
        <end position="81"/>
    </location>
</feature>
<feature type="domain" description="4Fe-4S ferredoxin-type 1" evidence="1">
    <location>
        <begin position="2"/>
        <end position="31"/>
    </location>
</feature>
<feature type="domain" description="4Fe-4S ferredoxin-type 2" evidence="1">
    <location>
        <begin position="39"/>
        <end position="68"/>
    </location>
</feature>
<feature type="binding site" evidence="1">
    <location>
        <position position="11"/>
    </location>
    <ligand>
        <name>[4Fe-4S] cluster</name>
        <dbReference type="ChEBI" id="CHEBI:49883"/>
        <label>1</label>
    </ligand>
</feature>
<feature type="binding site" evidence="1">
    <location>
        <position position="14"/>
    </location>
    <ligand>
        <name>[4Fe-4S] cluster</name>
        <dbReference type="ChEBI" id="CHEBI:49883"/>
        <label>1</label>
    </ligand>
</feature>
<feature type="binding site" evidence="1">
    <location>
        <position position="17"/>
    </location>
    <ligand>
        <name>[4Fe-4S] cluster</name>
        <dbReference type="ChEBI" id="CHEBI:49883"/>
        <label>1</label>
    </ligand>
</feature>
<feature type="binding site" evidence="1">
    <location>
        <position position="21"/>
    </location>
    <ligand>
        <name>[4Fe-4S] cluster</name>
        <dbReference type="ChEBI" id="CHEBI:49883"/>
        <label>2</label>
    </ligand>
</feature>
<feature type="binding site" evidence="1">
    <location>
        <position position="48"/>
    </location>
    <ligand>
        <name>[4Fe-4S] cluster</name>
        <dbReference type="ChEBI" id="CHEBI:49883"/>
        <label>2</label>
    </ligand>
</feature>
<feature type="binding site" evidence="1">
    <location>
        <position position="51"/>
    </location>
    <ligand>
        <name>[4Fe-4S] cluster</name>
        <dbReference type="ChEBI" id="CHEBI:49883"/>
        <label>2</label>
    </ligand>
</feature>
<feature type="binding site" evidence="1">
    <location>
        <position position="54"/>
    </location>
    <ligand>
        <name>[4Fe-4S] cluster</name>
        <dbReference type="ChEBI" id="CHEBI:49883"/>
        <label>2</label>
    </ligand>
</feature>
<feature type="binding site" evidence="1">
    <location>
        <position position="58"/>
    </location>
    <ligand>
        <name>[4Fe-4S] cluster</name>
        <dbReference type="ChEBI" id="CHEBI:49883"/>
        <label>1</label>
    </ligand>
</feature>